<gene>
    <name type="primary">ublcp1</name>
</gene>
<organism>
    <name type="scientific">Xenopus laevis</name>
    <name type="common">African clawed frog</name>
    <dbReference type="NCBI Taxonomy" id="8355"/>
    <lineage>
        <taxon>Eukaryota</taxon>
        <taxon>Metazoa</taxon>
        <taxon>Chordata</taxon>
        <taxon>Craniata</taxon>
        <taxon>Vertebrata</taxon>
        <taxon>Euteleostomi</taxon>
        <taxon>Amphibia</taxon>
        <taxon>Batrachia</taxon>
        <taxon>Anura</taxon>
        <taxon>Pipoidea</taxon>
        <taxon>Pipidae</taxon>
        <taxon>Xenopodinae</taxon>
        <taxon>Xenopus</taxon>
        <taxon>Xenopus</taxon>
    </lineage>
</organism>
<evidence type="ECO:0000250" key="1">
    <source>
        <dbReference type="UniProtKB" id="Q8WVY7"/>
    </source>
</evidence>
<evidence type="ECO:0000250" key="2">
    <source>
        <dbReference type="UniProtKB" id="Q9XZ16"/>
    </source>
</evidence>
<evidence type="ECO:0000255" key="3">
    <source>
        <dbReference type="PROSITE-ProRule" id="PRU00214"/>
    </source>
</evidence>
<evidence type="ECO:0000255" key="4">
    <source>
        <dbReference type="PROSITE-ProRule" id="PRU00336"/>
    </source>
</evidence>
<protein>
    <recommendedName>
        <fullName>Ubiquitin-like domain-containing CTD phosphatase 1</fullName>
        <ecNumber evidence="1">3.1.3.16</ecNumber>
    </recommendedName>
    <alternativeName>
        <fullName>Nuclear proteasome inhibitor UBLCP1</fullName>
    </alternativeName>
</protein>
<sequence length="318" mass="36740">MTLSLIIKWGGQEFPLSALSEEDTVLDLKHSLKSLTGVLPERMKLLGLKYKGKPAENDVKLGVLRLKPNTKIMMMGTREESLEEMMAPPPDNDEVVNDFDIDEEVVEVENREENLAKISRRVKDYKVEVLNPPREGKKLLVLDVDYTLFDHRSCAETGQELMRPYLHEFLSSAYEDYDIVIWSATSMKWIEAKMKELGVTTNANYKITFMLDSAAMITVHTPRRGLVDVKPLGVIWGKYGEFYSKNNTIMFDDIGRNFLMNPQNGLKIRPFMKAHLNRDKDKELVKLSQYLKEIAQLDDLSELNHKHWERYLAKKQGQ</sequence>
<proteinExistence type="evidence at transcript level"/>
<comment type="function">
    <text evidence="1">Dephosphorylates 26S nuclear proteasomes, thereby decreasing their proteolytic activity. Recruited to the 19S regulatory particle of the 26S proteasome where it dephosphorylates 19S component psmc2 which impairs psmc2 ATPase activity and disrupts 26S proteasome assembly. Has also been reported to stimulate the proteolytic activity of the 26S proteasome.</text>
</comment>
<comment type="catalytic activity">
    <reaction evidence="1">
        <text>O-phospho-L-seryl-[protein] + H2O = L-seryl-[protein] + phosphate</text>
        <dbReference type="Rhea" id="RHEA:20629"/>
        <dbReference type="Rhea" id="RHEA-COMP:9863"/>
        <dbReference type="Rhea" id="RHEA-COMP:11604"/>
        <dbReference type="ChEBI" id="CHEBI:15377"/>
        <dbReference type="ChEBI" id="CHEBI:29999"/>
        <dbReference type="ChEBI" id="CHEBI:43474"/>
        <dbReference type="ChEBI" id="CHEBI:83421"/>
        <dbReference type="EC" id="3.1.3.16"/>
    </reaction>
</comment>
<comment type="catalytic activity">
    <reaction evidence="1">
        <text>O-phospho-L-threonyl-[protein] + H2O = L-threonyl-[protein] + phosphate</text>
        <dbReference type="Rhea" id="RHEA:47004"/>
        <dbReference type="Rhea" id="RHEA-COMP:11060"/>
        <dbReference type="Rhea" id="RHEA-COMP:11605"/>
        <dbReference type="ChEBI" id="CHEBI:15377"/>
        <dbReference type="ChEBI" id="CHEBI:30013"/>
        <dbReference type="ChEBI" id="CHEBI:43474"/>
        <dbReference type="ChEBI" id="CHEBI:61977"/>
        <dbReference type="EC" id="3.1.3.16"/>
    </reaction>
</comment>
<comment type="cofactor">
    <cofactor evidence="1">
        <name>Mg(2+)</name>
        <dbReference type="ChEBI" id="CHEBI:18420"/>
    </cofactor>
</comment>
<comment type="subcellular location">
    <subcellularLocation>
        <location evidence="1">Nucleus</location>
    </subcellularLocation>
    <text evidence="1">Colocalizes with nuclear proteasomes.</text>
</comment>
<comment type="domain">
    <text evidence="1">The Ubiquitin-like domain mediates interaction with proteasomes.</text>
</comment>
<feature type="chain" id="PRO_0000242646" description="Ubiquitin-like domain-containing CTD phosphatase 1">
    <location>
        <begin position="1"/>
        <end position="318"/>
    </location>
</feature>
<feature type="domain" description="Ubiquitin-like" evidence="3">
    <location>
        <begin position="3"/>
        <end position="81"/>
    </location>
</feature>
<feature type="domain" description="FCP1 homology" evidence="4">
    <location>
        <begin position="133"/>
        <end position="294"/>
    </location>
</feature>
<feature type="binding site" evidence="2">
    <location>
        <position position="143"/>
    </location>
    <ligand>
        <name>Mg(2+)</name>
        <dbReference type="ChEBI" id="CHEBI:18420"/>
    </ligand>
</feature>
<feature type="binding site" evidence="2">
    <location>
        <position position="145"/>
    </location>
    <ligand>
        <name>Mg(2+)</name>
        <dbReference type="ChEBI" id="CHEBI:18420"/>
    </ligand>
</feature>
<feature type="binding site" evidence="2">
    <location>
        <position position="253"/>
    </location>
    <ligand>
        <name>Mg(2+)</name>
        <dbReference type="ChEBI" id="CHEBI:18420"/>
    </ligand>
</feature>
<dbReference type="EC" id="3.1.3.16" evidence="1"/>
<dbReference type="EMBL" id="BC082386">
    <property type="protein sequence ID" value="AAH82386.1"/>
    <property type="molecule type" value="mRNA"/>
</dbReference>
<dbReference type="RefSeq" id="NP_001087860.1">
    <property type="nucleotide sequence ID" value="NM_001094391.1"/>
</dbReference>
<dbReference type="SMR" id="Q641F1"/>
<dbReference type="GeneID" id="447721"/>
<dbReference type="KEGG" id="xla:447721"/>
<dbReference type="AGR" id="Xenbase:XB-GENE-5892757"/>
<dbReference type="CTD" id="447721"/>
<dbReference type="Xenbase" id="XB-GENE-5892757">
    <property type="gene designation" value="ublcp1.S"/>
</dbReference>
<dbReference type="OMA" id="TVHTPKY"/>
<dbReference type="OrthoDB" id="1711508at2759"/>
<dbReference type="Proteomes" id="UP000186698">
    <property type="component" value="Chromosome 3S"/>
</dbReference>
<dbReference type="Bgee" id="447721">
    <property type="expression patterns" value="Expressed in muscle tissue and 19 other cell types or tissues"/>
</dbReference>
<dbReference type="GO" id="GO:0005634">
    <property type="term" value="C:nucleus"/>
    <property type="evidence" value="ECO:0000318"/>
    <property type="project" value="GO_Central"/>
</dbReference>
<dbReference type="GO" id="GO:0046872">
    <property type="term" value="F:metal ion binding"/>
    <property type="evidence" value="ECO:0007669"/>
    <property type="project" value="UniProtKB-KW"/>
</dbReference>
<dbReference type="GO" id="GO:0004722">
    <property type="term" value="F:protein serine/threonine phosphatase activity"/>
    <property type="evidence" value="ECO:0000318"/>
    <property type="project" value="GO_Central"/>
</dbReference>
<dbReference type="GO" id="GO:0090364">
    <property type="term" value="P:regulation of proteasome assembly"/>
    <property type="evidence" value="ECO:0000318"/>
    <property type="project" value="GO_Central"/>
</dbReference>
<dbReference type="CDD" id="cd01813">
    <property type="entry name" value="Ubl_UBLCP1"/>
    <property type="match status" value="1"/>
</dbReference>
<dbReference type="FunFam" id="3.40.50.1000:FF:000050">
    <property type="entry name" value="Ubiquitin-like domain-containing CTD phosphatase 1"/>
    <property type="match status" value="1"/>
</dbReference>
<dbReference type="FunFam" id="3.10.20.90:FF:000060">
    <property type="entry name" value="ubiquitin-like domain-containing CTD phosphatase 1"/>
    <property type="match status" value="1"/>
</dbReference>
<dbReference type="Gene3D" id="3.40.50.1000">
    <property type="entry name" value="HAD superfamily/HAD-like"/>
    <property type="match status" value="1"/>
</dbReference>
<dbReference type="Gene3D" id="3.10.20.90">
    <property type="entry name" value="Phosphatidylinositol 3-kinase Catalytic Subunit, Chain A, domain 1"/>
    <property type="match status" value="1"/>
</dbReference>
<dbReference type="InterPro" id="IPR004274">
    <property type="entry name" value="FCP1_dom"/>
</dbReference>
<dbReference type="InterPro" id="IPR036412">
    <property type="entry name" value="HAD-like_sf"/>
</dbReference>
<dbReference type="InterPro" id="IPR011943">
    <property type="entry name" value="HAD-SF_hydro_IIID"/>
</dbReference>
<dbReference type="InterPro" id="IPR023214">
    <property type="entry name" value="HAD_sf"/>
</dbReference>
<dbReference type="InterPro" id="IPR000626">
    <property type="entry name" value="Ubiquitin-like_dom"/>
</dbReference>
<dbReference type="InterPro" id="IPR029071">
    <property type="entry name" value="Ubiquitin-like_domsf"/>
</dbReference>
<dbReference type="InterPro" id="IPR051658">
    <property type="entry name" value="UBLCP1"/>
</dbReference>
<dbReference type="NCBIfam" id="TIGR02245">
    <property type="entry name" value="HAD_IIID1"/>
    <property type="match status" value="1"/>
</dbReference>
<dbReference type="PANTHER" id="PTHR48493">
    <property type="entry name" value="UBIQUITIN-LIKE DOMAIN-CONTAINING CTD PHOSPHATASE 1"/>
    <property type="match status" value="1"/>
</dbReference>
<dbReference type="PANTHER" id="PTHR48493:SF1">
    <property type="entry name" value="UBIQUITIN-LIKE DOMAIN-CONTAINING CTD PHOSPHATASE 1"/>
    <property type="match status" value="1"/>
</dbReference>
<dbReference type="Pfam" id="PF03031">
    <property type="entry name" value="NIF"/>
    <property type="match status" value="1"/>
</dbReference>
<dbReference type="Pfam" id="PF00240">
    <property type="entry name" value="ubiquitin"/>
    <property type="match status" value="1"/>
</dbReference>
<dbReference type="SMART" id="SM00577">
    <property type="entry name" value="CPDc"/>
    <property type="match status" value="1"/>
</dbReference>
<dbReference type="SMART" id="SM00213">
    <property type="entry name" value="UBQ"/>
    <property type="match status" value="1"/>
</dbReference>
<dbReference type="SUPFAM" id="SSF56784">
    <property type="entry name" value="HAD-like"/>
    <property type="match status" value="1"/>
</dbReference>
<dbReference type="SUPFAM" id="SSF54236">
    <property type="entry name" value="Ubiquitin-like"/>
    <property type="match status" value="1"/>
</dbReference>
<dbReference type="PROSITE" id="PS50969">
    <property type="entry name" value="FCP1"/>
    <property type="match status" value="1"/>
</dbReference>
<dbReference type="PROSITE" id="PS50053">
    <property type="entry name" value="UBIQUITIN_2"/>
    <property type="match status" value="1"/>
</dbReference>
<name>UBCP1_XENLA</name>
<accession>Q641F1</accession>
<keyword id="KW-0378">Hydrolase</keyword>
<keyword id="KW-0460">Magnesium</keyword>
<keyword id="KW-0479">Metal-binding</keyword>
<keyword id="KW-0539">Nucleus</keyword>
<keyword id="KW-0904">Protein phosphatase</keyword>
<keyword id="KW-1185">Reference proteome</keyword>
<reference key="1">
    <citation type="submission" date="2004-09" db="EMBL/GenBank/DDBJ databases">
        <authorList>
            <consortium name="NIH - Xenopus Gene Collection (XGC) project"/>
        </authorList>
    </citation>
    <scope>NUCLEOTIDE SEQUENCE [LARGE SCALE MRNA]</scope>
    <source>
        <tissue>Kidney</tissue>
    </source>
</reference>